<gene>
    <name type="primary">petN</name>
    <name type="synonym">ycf6</name>
</gene>
<reference key="1">
    <citation type="journal article" date="1995" name="Plant Mol. Biol. Rep.">
        <title>The chloroplast genome of a chlorophyll a+c-containing alga, Odontella sinensis.</title>
        <authorList>
            <person name="Kowallik K.V."/>
            <person name="Stoebe B."/>
            <person name="Schaffran I."/>
            <person name="Kroth-Pancic P."/>
            <person name="Freier U."/>
        </authorList>
    </citation>
    <scope>NUCLEOTIDE SEQUENCE [LARGE SCALE GENOMIC DNA]</scope>
</reference>
<feature type="chain" id="PRO_0000217118" description="Cytochrome b6-f complex subunit 8">
    <location>
        <begin position="1"/>
        <end position="29"/>
    </location>
</feature>
<feature type="transmembrane region" description="Helical" evidence="2">
    <location>
        <begin position="3"/>
        <end position="23"/>
    </location>
</feature>
<accession>P49527</accession>
<protein>
    <recommendedName>
        <fullName>Cytochrome b6-f complex subunit 8</fullName>
    </recommendedName>
    <alternativeName>
        <fullName>Cytochrome b6-f complex subunit PetN</fullName>
    </alternativeName>
    <alternativeName>
        <fullName>Cytochrome b6-f complex subunit VIII</fullName>
    </alternativeName>
</protein>
<evidence type="ECO:0000250" key="1"/>
<evidence type="ECO:0000255" key="2"/>
<evidence type="ECO:0000305" key="3"/>
<proteinExistence type="inferred from homology"/>
<sequence length="29" mass="3249">MDIISLGWAGLMTMFTFSLALVVWARNGF</sequence>
<keyword id="KW-0150">Chloroplast</keyword>
<keyword id="KW-0249">Electron transport</keyword>
<keyword id="KW-0472">Membrane</keyword>
<keyword id="KW-0602">Photosynthesis</keyword>
<keyword id="KW-0934">Plastid</keyword>
<keyword id="KW-0793">Thylakoid</keyword>
<keyword id="KW-0812">Transmembrane</keyword>
<keyword id="KW-1133">Transmembrane helix</keyword>
<keyword id="KW-0813">Transport</keyword>
<dbReference type="EMBL" id="Z67753">
    <property type="protein sequence ID" value="CAA91699.1"/>
    <property type="molecule type" value="Genomic_DNA"/>
</dbReference>
<dbReference type="PIR" id="S78326">
    <property type="entry name" value="S78326"/>
</dbReference>
<dbReference type="RefSeq" id="NP_043667.1">
    <property type="nucleotide sequence ID" value="NC_001713.1"/>
</dbReference>
<dbReference type="SMR" id="P49527"/>
<dbReference type="GeneID" id="801707"/>
<dbReference type="GO" id="GO:0009535">
    <property type="term" value="C:chloroplast thylakoid membrane"/>
    <property type="evidence" value="ECO:0007669"/>
    <property type="project" value="UniProtKB-SubCell"/>
</dbReference>
<dbReference type="GO" id="GO:0009512">
    <property type="term" value="C:cytochrome b6f complex"/>
    <property type="evidence" value="ECO:0007669"/>
    <property type="project" value="InterPro"/>
</dbReference>
<dbReference type="GO" id="GO:0045158">
    <property type="term" value="F:electron transporter, transferring electrons within cytochrome b6/f complex of photosystem II activity"/>
    <property type="evidence" value="ECO:0007669"/>
    <property type="project" value="InterPro"/>
</dbReference>
<dbReference type="GO" id="GO:0017004">
    <property type="term" value="P:cytochrome complex assembly"/>
    <property type="evidence" value="ECO:0007669"/>
    <property type="project" value="UniProtKB-UniRule"/>
</dbReference>
<dbReference type="GO" id="GO:0015979">
    <property type="term" value="P:photosynthesis"/>
    <property type="evidence" value="ECO:0007669"/>
    <property type="project" value="UniProtKB-KW"/>
</dbReference>
<dbReference type="HAMAP" id="MF_00395">
    <property type="entry name" value="Cytb6_f_PetN"/>
    <property type="match status" value="1"/>
</dbReference>
<dbReference type="InterPro" id="IPR036143">
    <property type="entry name" value="Cytochr_b6-f_cplx_su8_sf"/>
</dbReference>
<dbReference type="InterPro" id="IPR005497">
    <property type="entry name" value="Cytochrome_b6-f_cplx_su8"/>
</dbReference>
<dbReference type="Pfam" id="PF03742">
    <property type="entry name" value="PetN"/>
    <property type="match status" value="1"/>
</dbReference>
<dbReference type="SUPFAM" id="SSF103451">
    <property type="entry name" value="PetN subunit of the cytochrome b6f complex"/>
    <property type="match status" value="1"/>
</dbReference>
<organism>
    <name type="scientific">Trieres chinensis</name>
    <name type="common">Marine centric diatom</name>
    <name type="synonym">Odontella sinensis</name>
    <dbReference type="NCBI Taxonomy" id="1514140"/>
    <lineage>
        <taxon>Eukaryota</taxon>
        <taxon>Sar</taxon>
        <taxon>Stramenopiles</taxon>
        <taxon>Ochrophyta</taxon>
        <taxon>Bacillariophyta</taxon>
        <taxon>Mediophyceae</taxon>
        <taxon>Biddulphiophycidae</taxon>
        <taxon>Eupodiscales</taxon>
        <taxon>Parodontellaceae</taxon>
        <taxon>Trieres</taxon>
    </lineage>
</organism>
<comment type="function">
    <text evidence="1">Component of the cytochrome b6-f complex, which mediates electron transfer between photosystem II (PSII) and photosystem I (PSI), cyclic electron flow around PSI, and state transitions.</text>
</comment>
<comment type="subunit">
    <text evidence="1">The 4 large subunits of the cytochrome b6-f complex are cytochrome b6, subunit IV (17 kDa polypeptide, PetD), cytochrome f and the Rieske protein, while the 4 small subunits are PetG, PetL, PetM and PetN. The complex functions as a dimer (By similarity).</text>
</comment>
<comment type="subcellular location">
    <subcellularLocation>
        <location evidence="1">Plastid</location>
        <location evidence="1">Chloroplast thylakoid membrane</location>
        <topology evidence="1">Single-pass membrane protein</topology>
    </subcellularLocation>
</comment>
<comment type="similarity">
    <text evidence="3">Belongs to the PetN family.</text>
</comment>
<name>PETN_TRICV</name>
<geneLocation type="chloroplast"/>